<accession>B4F231</accession>
<keyword id="KW-0067">ATP-binding</keyword>
<keyword id="KW-0547">Nucleotide-binding</keyword>
<keyword id="KW-0548">Nucleotidyltransferase</keyword>
<keyword id="KW-1185">Reference proteome</keyword>
<keyword id="KW-0808">Transferase</keyword>
<dbReference type="EC" id="2.7.7.4" evidence="1"/>
<dbReference type="EMBL" id="AM942759">
    <property type="protein sequence ID" value="CAR44458.1"/>
    <property type="molecule type" value="Genomic_DNA"/>
</dbReference>
<dbReference type="RefSeq" id="WP_004244356.1">
    <property type="nucleotide sequence ID" value="NC_010554.1"/>
</dbReference>
<dbReference type="SMR" id="B4F231"/>
<dbReference type="EnsemblBacteria" id="CAR44458">
    <property type="protein sequence ID" value="CAR44458"/>
    <property type="gene ID" value="PMI2246"/>
</dbReference>
<dbReference type="GeneID" id="6802462"/>
<dbReference type="KEGG" id="pmr:PMI2246"/>
<dbReference type="eggNOG" id="COG0175">
    <property type="taxonomic scope" value="Bacteria"/>
</dbReference>
<dbReference type="HOGENOM" id="CLU_043026_0_0_6"/>
<dbReference type="UniPathway" id="UPA00140">
    <property type="reaction ID" value="UER00204"/>
</dbReference>
<dbReference type="Proteomes" id="UP000008319">
    <property type="component" value="Chromosome"/>
</dbReference>
<dbReference type="GO" id="GO:0005524">
    <property type="term" value="F:ATP binding"/>
    <property type="evidence" value="ECO:0007669"/>
    <property type="project" value="UniProtKB-KW"/>
</dbReference>
<dbReference type="GO" id="GO:0004781">
    <property type="term" value="F:sulfate adenylyltransferase (ATP) activity"/>
    <property type="evidence" value="ECO:0007669"/>
    <property type="project" value="UniProtKB-UniRule"/>
</dbReference>
<dbReference type="GO" id="GO:0070814">
    <property type="term" value="P:hydrogen sulfide biosynthetic process"/>
    <property type="evidence" value="ECO:0007669"/>
    <property type="project" value="UniProtKB-UniRule"/>
</dbReference>
<dbReference type="GO" id="GO:0000103">
    <property type="term" value="P:sulfate assimilation"/>
    <property type="evidence" value="ECO:0007669"/>
    <property type="project" value="UniProtKB-UniRule"/>
</dbReference>
<dbReference type="CDD" id="cd23946">
    <property type="entry name" value="Sulfate_adenylyltransferase_2"/>
    <property type="match status" value="1"/>
</dbReference>
<dbReference type="FunFam" id="3.40.50.620:FF:000002">
    <property type="entry name" value="Sulfate adenylyltransferase subunit 2"/>
    <property type="match status" value="1"/>
</dbReference>
<dbReference type="Gene3D" id="3.40.50.620">
    <property type="entry name" value="HUPs"/>
    <property type="match status" value="1"/>
</dbReference>
<dbReference type="HAMAP" id="MF_00064">
    <property type="entry name" value="Sulf_adenylyltr_sub2"/>
    <property type="match status" value="1"/>
</dbReference>
<dbReference type="InterPro" id="IPR002500">
    <property type="entry name" value="PAPS_reduct_dom"/>
</dbReference>
<dbReference type="InterPro" id="IPR014729">
    <property type="entry name" value="Rossmann-like_a/b/a_fold"/>
</dbReference>
<dbReference type="InterPro" id="IPR011784">
    <property type="entry name" value="SO4_adenylTrfase_ssu"/>
</dbReference>
<dbReference type="InterPro" id="IPR050128">
    <property type="entry name" value="Sulfate_adenylyltrnsfr_sub2"/>
</dbReference>
<dbReference type="NCBIfam" id="TIGR02039">
    <property type="entry name" value="CysD"/>
    <property type="match status" value="1"/>
</dbReference>
<dbReference type="NCBIfam" id="NF003587">
    <property type="entry name" value="PRK05253.1"/>
    <property type="match status" value="1"/>
</dbReference>
<dbReference type="NCBIfam" id="NF009214">
    <property type="entry name" value="PRK12563.1"/>
    <property type="match status" value="1"/>
</dbReference>
<dbReference type="PANTHER" id="PTHR43196">
    <property type="entry name" value="SULFATE ADENYLYLTRANSFERASE SUBUNIT 2"/>
    <property type="match status" value="1"/>
</dbReference>
<dbReference type="PANTHER" id="PTHR43196:SF1">
    <property type="entry name" value="SULFATE ADENYLYLTRANSFERASE SUBUNIT 2"/>
    <property type="match status" value="1"/>
</dbReference>
<dbReference type="Pfam" id="PF01507">
    <property type="entry name" value="PAPS_reduct"/>
    <property type="match status" value="1"/>
</dbReference>
<dbReference type="PIRSF" id="PIRSF002936">
    <property type="entry name" value="CysDAde_trans"/>
    <property type="match status" value="1"/>
</dbReference>
<dbReference type="SUPFAM" id="SSF52402">
    <property type="entry name" value="Adenine nucleotide alpha hydrolases-like"/>
    <property type="match status" value="1"/>
</dbReference>
<sequence>MNETQLTHLQQLEAESIYILREVVAEFENPVMLYSIGKDSSVMLHLARKAFYPAKLPFPLLHVDTGWKFREMYEFRDKTAKEYGFDLKVYRNPQGAQLGINPFIHGSAKHTDIMKTEGLKQALDKYGFDAAFGGARRDEEKSRAKERIYSFRDRSHRWDPKNQRPELWQNYNGQINKGESIRVFPLSNWTELDIWQYIYLENIDIVPLYFAKHRPVIERDGTLIMVDDDRIDLKAGEVITQQKVRFRTLGCWPLTGAIPSQADTLPAIIEEMLISTSSERQGRLIDSDQSASMELKKRQGYF</sequence>
<feature type="chain" id="PRO_1000092214" description="Sulfate adenylyltransferase subunit 2">
    <location>
        <begin position="1"/>
        <end position="302"/>
    </location>
</feature>
<protein>
    <recommendedName>
        <fullName evidence="1">Sulfate adenylyltransferase subunit 2</fullName>
        <ecNumber evidence="1">2.7.7.4</ecNumber>
    </recommendedName>
    <alternativeName>
        <fullName evidence="1">ATP-sulfurylase small subunit</fullName>
    </alternativeName>
    <alternativeName>
        <fullName evidence="1">Sulfate adenylate transferase</fullName>
        <shortName evidence="1">SAT</shortName>
    </alternativeName>
</protein>
<evidence type="ECO:0000255" key="1">
    <source>
        <dbReference type="HAMAP-Rule" id="MF_00064"/>
    </source>
</evidence>
<gene>
    <name evidence="1" type="primary">cysD</name>
    <name type="ordered locus">PMI2246</name>
</gene>
<proteinExistence type="inferred from homology"/>
<reference key="1">
    <citation type="journal article" date="2008" name="J. Bacteriol.">
        <title>Complete genome sequence of uropathogenic Proteus mirabilis, a master of both adherence and motility.</title>
        <authorList>
            <person name="Pearson M.M."/>
            <person name="Sebaihia M."/>
            <person name="Churcher C."/>
            <person name="Quail M.A."/>
            <person name="Seshasayee A.S."/>
            <person name="Luscombe N.M."/>
            <person name="Abdellah Z."/>
            <person name="Arrosmith C."/>
            <person name="Atkin B."/>
            <person name="Chillingworth T."/>
            <person name="Hauser H."/>
            <person name="Jagels K."/>
            <person name="Moule S."/>
            <person name="Mungall K."/>
            <person name="Norbertczak H."/>
            <person name="Rabbinowitsch E."/>
            <person name="Walker D."/>
            <person name="Whithead S."/>
            <person name="Thomson N.R."/>
            <person name="Rather P.N."/>
            <person name="Parkhill J."/>
            <person name="Mobley H.L.T."/>
        </authorList>
    </citation>
    <scope>NUCLEOTIDE SEQUENCE [LARGE SCALE GENOMIC DNA]</scope>
    <source>
        <strain>HI4320</strain>
    </source>
</reference>
<organism>
    <name type="scientific">Proteus mirabilis (strain HI4320)</name>
    <dbReference type="NCBI Taxonomy" id="529507"/>
    <lineage>
        <taxon>Bacteria</taxon>
        <taxon>Pseudomonadati</taxon>
        <taxon>Pseudomonadota</taxon>
        <taxon>Gammaproteobacteria</taxon>
        <taxon>Enterobacterales</taxon>
        <taxon>Morganellaceae</taxon>
        <taxon>Proteus</taxon>
    </lineage>
</organism>
<name>CYSD_PROMH</name>
<comment type="function">
    <text evidence="1">With CysN forms the ATP sulfurylase (ATPS) that catalyzes the adenylation of sulfate producing adenosine 5'-phosphosulfate (APS) and diphosphate, the first enzymatic step in sulfur assimilation pathway. APS synthesis involves the formation of a high-energy phosphoric-sulfuric acid anhydride bond driven by GTP hydrolysis by CysN coupled to ATP hydrolysis by CysD.</text>
</comment>
<comment type="catalytic activity">
    <reaction evidence="1">
        <text>sulfate + ATP + H(+) = adenosine 5'-phosphosulfate + diphosphate</text>
        <dbReference type="Rhea" id="RHEA:18133"/>
        <dbReference type="ChEBI" id="CHEBI:15378"/>
        <dbReference type="ChEBI" id="CHEBI:16189"/>
        <dbReference type="ChEBI" id="CHEBI:30616"/>
        <dbReference type="ChEBI" id="CHEBI:33019"/>
        <dbReference type="ChEBI" id="CHEBI:58243"/>
        <dbReference type="EC" id="2.7.7.4"/>
    </reaction>
</comment>
<comment type="pathway">
    <text evidence="1">Sulfur metabolism; hydrogen sulfide biosynthesis; sulfite from sulfate: step 1/3.</text>
</comment>
<comment type="subunit">
    <text evidence="1">Heterodimer composed of CysD, the smaller subunit, and CysN.</text>
</comment>
<comment type="similarity">
    <text evidence="1">Belongs to the PAPS reductase family. CysD subfamily.</text>
</comment>